<accession>A0Q492</accession>
<name>ISPE_FRATN</name>
<evidence type="ECO:0000255" key="1">
    <source>
        <dbReference type="HAMAP-Rule" id="MF_00061"/>
    </source>
</evidence>
<proteinExistence type="inferred from homology"/>
<comment type="function">
    <text evidence="1">Catalyzes the phosphorylation of the position 2 hydroxy group of 4-diphosphocytidyl-2C-methyl-D-erythritol.</text>
</comment>
<comment type="catalytic activity">
    <reaction evidence="1">
        <text>4-CDP-2-C-methyl-D-erythritol + ATP = 4-CDP-2-C-methyl-D-erythritol 2-phosphate + ADP + H(+)</text>
        <dbReference type="Rhea" id="RHEA:18437"/>
        <dbReference type="ChEBI" id="CHEBI:15378"/>
        <dbReference type="ChEBI" id="CHEBI:30616"/>
        <dbReference type="ChEBI" id="CHEBI:57823"/>
        <dbReference type="ChEBI" id="CHEBI:57919"/>
        <dbReference type="ChEBI" id="CHEBI:456216"/>
        <dbReference type="EC" id="2.7.1.148"/>
    </reaction>
</comment>
<comment type="pathway">
    <text evidence="1">Isoprenoid biosynthesis; isopentenyl diphosphate biosynthesis via DXP pathway; isopentenyl diphosphate from 1-deoxy-D-xylulose 5-phosphate: step 3/6.</text>
</comment>
<comment type="similarity">
    <text evidence="1">Belongs to the GHMP kinase family. IspE subfamily.</text>
</comment>
<gene>
    <name evidence="1" type="primary">ispE</name>
    <name type="ordered locus">FTN_0146</name>
</gene>
<protein>
    <recommendedName>
        <fullName evidence="1">4-diphosphocytidyl-2-C-methyl-D-erythritol kinase</fullName>
        <shortName evidence="1">CMK</shortName>
        <ecNumber evidence="1">2.7.1.148</ecNumber>
    </recommendedName>
    <alternativeName>
        <fullName evidence="1">4-(cytidine-5'-diphospho)-2-C-methyl-D-erythritol kinase</fullName>
    </alternativeName>
</protein>
<reference key="1">
    <citation type="journal article" date="2007" name="Genome Biol.">
        <title>Comparison of Francisella tularensis genomes reveals evolutionary events associated with the emergence of human pathogenic strains.</title>
        <authorList>
            <person name="Rohmer L."/>
            <person name="Fong C."/>
            <person name="Abmayr S."/>
            <person name="Wasnick M."/>
            <person name="Larson Freeman T.J."/>
            <person name="Radey M."/>
            <person name="Guina T."/>
            <person name="Svensson K."/>
            <person name="Hayden H.S."/>
            <person name="Jacobs M."/>
            <person name="Gallagher L.A."/>
            <person name="Manoil C."/>
            <person name="Ernst R.K."/>
            <person name="Drees B."/>
            <person name="Buckley D."/>
            <person name="Haugen E."/>
            <person name="Bovee D."/>
            <person name="Zhou Y."/>
            <person name="Chang J."/>
            <person name="Levy R."/>
            <person name="Lim R."/>
            <person name="Gillett W."/>
            <person name="Guenthener D."/>
            <person name="Kang A."/>
            <person name="Shaffer S.A."/>
            <person name="Taylor G."/>
            <person name="Chen J."/>
            <person name="Gallis B."/>
            <person name="D'Argenio D.A."/>
            <person name="Forsman M."/>
            <person name="Olson M.V."/>
            <person name="Goodlett D.R."/>
            <person name="Kaul R."/>
            <person name="Miller S.I."/>
            <person name="Brittnacher M.J."/>
        </authorList>
    </citation>
    <scope>NUCLEOTIDE SEQUENCE [LARGE SCALE GENOMIC DNA]</scope>
    <source>
        <strain>U112</strain>
    </source>
</reference>
<dbReference type="EC" id="2.7.1.148" evidence="1"/>
<dbReference type="EMBL" id="CP000439">
    <property type="protein sequence ID" value="ABK89057.1"/>
    <property type="molecule type" value="Genomic_DNA"/>
</dbReference>
<dbReference type="RefSeq" id="WP_003041075.1">
    <property type="nucleotide sequence ID" value="NC_008601.1"/>
</dbReference>
<dbReference type="SMR" id="A0Q492"/>
<dbReference type="KEGG" id="ftn:FTN_0146"/>
<dbReference type="KEGG" id="ftx:AW25_54"/>
<dbReference type="BioCyc" id="FTUL401614:G1G75-151-MONOMER"/>
<dbReference type="UniPathway" id="UPA00056">
    <property type="reaction ID" value="UER00094"/>
</dbReference>
<dbReference type="Proteomes" id="UP000000762">
    <property type="component" value="Chromosome"/>
</dbReference>
<dbReference type="GO" id="GO:0050515">
    <property type="term" value="F:4-(cytidine 5'-diphospho)-2-C-methyl-D-erythritol kinase activity"/>
    <property type="evidence" value="ECO:0007669"/>
    <property type="project" value="UniProtKB-UniRule"/>
</dbReference>
<dbReference type="GO" id="GO:0005524">
    <property type="term" value="F:ATP binding"/>
    <property type="evidence" value="ECO:0007669"/>
    <property type="project" value="UniProtKB-UniRule"/>
</dbReference>
<dbReference type="GO" id="GO:0019288">
    <property type="term" value="P:isopentenyl diphosphate biosynthetic process, methylerythritol 4-phosphate pathway"/>
    <property type="evidence" value="ECO:0007669"/>
    <property type="project" value="UniProtKB-UniRule"/>
</dbReference>
<dbReference type="GO" id="GO:0016114">
    <property type="term" value="P:terpenoid biosynthetic process"/>
    <property type="evidence" value="ECO:0007669"/>
    <property type="project" value="InterPro"/>
</dbReference>
<dbReference type="Gene3D" id="3.30.230.10">
    <property type="match status" value="1"/>
</dbReference>
<dbReference type="Gene3D" id="3.30.70.890">
    <property type="entry name" value="GHMP kinase, C-terminal domain"/>
    <property type="match status" value="1"/>
</dbReference>
<dbReference type="HAMAP" id="MF_00061">
    <property type="entry name" value="IspE"/>
    <property type="match status" value="1"/>
</dbReference>
<dbReference type="InterPro" id="IPR013750">
    <property type="entry name" value="GHMP_kinase_C_dom"/>
</dbReference>
<dbReference type="InterPro" id="IPR036554">
    <property type="entry name" value="GHMP_kinase_C_sf"/>
</dbReference>
<dbReference type="InterPro" id="IPR006204">
    <property type="entry name" value="GHMP_kinase_N_dom"/>
</dbReference>
<dbReference type="InterPro" id="IPR004424">
    <property type="entry name" value="IspE"/>
</dbReference>
<dbReference type="InterPro" id="IPR020568">
    <property type="entry name" value="Ribosomal_Su5_D2-typ_SF"/>
</dbReference>
<dbReference type="InterPro" id="IPR014721">
    <property type="entry name" value="Ribsml_uS5_D2-typ_fold_subgr"/>
</dbReference>
<dbReference type="NCBIfam" id="TIGR00154">
    <property type="entry name" value="ispE"/>
    <property type="match status" value="1"/>
</dbReference>
<dbReference type="PANTHER" id="PTHR43527">
    <property type="entry name" value="4-DIPHOSPHOCYTIDYL-2-C-METHYL-D-ERYTHRITOL KINASE, CHLOROPLASTIC"/>
    <property type="match status" value="1"/>
</dbReference>
<dbReference type="PANTHER" id="PTHR43527:SF2">
    <property type="entry name" value="4-DIPHOSPHOCYTIDYL-2-C-METHYL-D-ERYTHRITOL KINASE, CHLOROPLASTIC"/>
    <property type="match status" value="1"/>
</dbReference>
<dbReference type="Pfam" id="PF08544">
    <property type="entry name" value="GHMP_kinases_C"/>
    <property type="match status" value="1"/>
</dbReference>
<dbReference type="Pfam" id="PF00288">
    <property type="entry name" value="GHMP_kinases_N"/>
    <property type="match status" value="1"/>
</dbReference>
<dbReference type="PIRSF" id="PIRSF010376">
    <property type="entry name" value="IspE"/>
    <property type="match status" value="1"/>
</dbReference>
<dbReference type="SUPFAM" id="SSF55060">
    <property type="entry name" value="GHMP Kinase, C-terminal domain"/>
    <property type="match status" value="1"/>
</dbReference>
<dbReference type="SUPFAM" id="SSF54211">
    <property type="entry name" value="Ribosomal protein S5 domain 2-like"/>
    <property type="match status" value="1"/>
</dbReference>
<sequence length="275" mass="31485">MANIKAKKYYSYAKINLFLHILNKRTDGYHNLQTWFTFLDLKDQLIFSFNNSREINISSNISIAAKQDNLVYKAIKKFQQSYRVQDIGVDIEIKKNIPMGAGLGGGSSNAATTLIALRDYYLPQLSNEEMIPLAAKLGADVPIFVYGKSAWAEGIGEILYHKDFSPQYALLIKPDIHISTKEFFVSEDLIKSSVLISKDLGFDKSIMHNDFENVFYAKYPEFSQYLKELDSDFRMTGTGSCFYLLSADKNKLEQLARKINKPLDKWLVKTLNYVY</sequence>
<organism>
    <name type="scientific">Francisella tularensis subsp. novicida (strain U112)</name>
    <dbReference type="NCBI Taxonomy" id="401614"/>
    <lineage>
        <taxon>Bacteria</taxon>
        <taxon>Pseudomonadati</taxon>
        <taxon>Pseudomonadota</taxon>
        <taxon>Gammaproteobacteria</taxon>
        <taxon>Thiotrichales</taxon>
        <taxon>Francisellaceae</taxon>
        <taxon>Francisella</taxon>
    </lineage>
</organism>
<feature type="chain" id="PRO_1000007849" description="4-diphosphocytidyl-2-C-methyl-D-erythritol kinase">
    <location>
        <begin position="1"/>
        <end position="275"/>
    </location>
</feature>
<feature type="active site" evidence="1">
    <location>
        <position position="14"/>
    </location>
</feature>
<feature type="active site" evidence="1">
    <location>
        <position position="140"/>
    </location>
</feature>
<feature type="binding site" evidence="1">
    <location>
        <begin position="98"/>
        <end position="108"/>
    </location>
    <ligand>
        <name>ATP</name>
        <dbReference type="ChEBI" id="CHEBI:30616"/>
    </ligand>
</feature>
<keyword id="KW-0067">ATP-binding</keyword>
<keyword id="KW-0414">Isoprene biosynthesis</keyword>
<keyword id="KW-0418">Kinase</keyword>
<keyword id="KW-0547">Nucleotide-binding</keyword>
<keyword id="KW-0808">Transferase</keyword>